<comment type="function">
    <text evidence="1">Plays a major role in antagonizing the type I IFN-mediated antiviral response by degrading or inhibiting multiple cellular factors required for either IFN induction or response pathways. Acts cooperatively with NS2 to repress activation and nuclear translocation of host IFN-regulatory factor IRF3. Also disrupts the association of IRF3 with CREBBP. Interacts with host mitochondrial-associated membrane (MAM) MAVS and prevents the interaction with RIGI. Interacts with TRIM25 to suppress TRIM25-mediated RIGI ubiquitination and thereby RIGI-MAVS interaction. Together with NS2, participates in the proteasomal degradation of host STAT2, IRF3, IRF7, TBK1 and RIGI through a NS-degradasome involving CUL2 and Elongin-C. The degradasome requires an intact mitochondrial MAVS. Decreases the levels of host TRAF3 and IKBKE/IKK-epsilon. As functions other than disruptions of the type I IFN-mediated antiviral signaling pathways, induces host SOCS1 and SOCS3 expression. Suppresses premature apoptosis by an NF-kappa-B-dependent, interferon-independent mechanism and thus facilitates virus growth. Additionally, NS1 may serve some inhibitory role in viral transcription and RNA replication. Suppresses proliferation and activation of host CD103+ CD8+ cytotoxic T-lymphocytes and Th17 helper T-lymphocytes.</text>
</comment>
<comment type="subunit">
    <text evidence="1">Monomer. Homomultimer. Heteromultimer with NS2. Interacts with the matrix protein M. Interacts with host ELOC and CUL2; this interaction allows NS1 to form an active E3 ligase with ELOC and CUL2. Interacts with host IRF3; this interaction leads to the disrupted association of IRF3 with CREBBP and thus reduced binding of IRF3 to the IFN-beta promoter. Interacts with host MAVS; this interaction prevents MAVS binding to RIGI and inhibits signaling pathway leading to interferon production. Interacts with host MAP1B/microtubule-associated protein 1B. Interacts with host TRIM25 (via SPRY domain); this interaction suppresses RIGI ubiquitination and results in decreased interaction between RIGI and MAVS.</text>
</comment>
<comment type="subcellular location">
    <subcellularLocation>
        <location evidence="1">Host cytoplasm</location>
    </subcellularLocation>
    <subcellularLocation>
        <location evidence="1">Host mitochondrion</location>
    </subcellularLocation>
    <subcellularLocation>
        <location evidence="1">Host nucleus</location>
    </subcellularLocation>
    <text evidence="1">Most NS1 resides in the mitochondria as a heteromer with NS2.</text>
</comment>
<comment type="domain">
    <text evidence="1">N-terminus is important for IKBKE/IKK-epsilon reduction. The DNLP motif has IFN suppressive functions like binding to host MAP1B.</text>
</comment>
<comment type="similarity">
    <text evidence="2">Belongs to the pneumovirus non-structural protein 1 family.</text>
</comment>
<protein>
    <recommendedName>
        <fullName>Non-structural protein 1</fullName>
    </recommendedName>
    <alternativeName>
        <fullName>Non-structural protein 1C</fullName>
    </alternativeName>
</protein>
<organismHost>
    <name type="scientific">Homo sapiens</name>
    <name type="common">Human</name>
    <dbReference type="NCBI Taxonomy" id="9606"/>
</organismHost>
<sequence length="139" mass="15526">MGCNSLSMIKVRLQNLFDNDEVALLKITCYTDKLILLTNALAKAAIHTIKLNGIVFIHVITSSEVCPDNNIVVKSNFTTMPILQNGGYIWELIELTHCSQLNGLMDDNCEIKFSKRLSDSVMTNYMNQISDLLGLDLNS</sequence>
<name>NS1_HRSVB</name>
<organism>
    <name type="scientific">Human respiratory syncytial virus B (strain B1)</name>
    <dbReference type="NCBI Taxonomy" id="79692"/>
    <lineage>
        <taxon>Viruses</taxon>
        <taxon>Riboviria</taxon>
        <taxon>Orthornavirae</taxon>
        <taxon>Negarnaviricota</taxon>
        <taxon>Haploviricotina</taxon>
        <taxon>Monjiviricetes</taxon>
        <taxon>Mononegavirales</taxon>
        <taxon>Pneumoviridae</taxon>
        <taxon>Orthopneumovirus</taxon>
        <taxon>Orthopneumovirus hominis</taxon>
    </lineage>
</organism>
<dbReference type="EMBL" id="AF013254">
    <property type="protein sequence ID" value="AAB82429.1"/>
    <property type="molecule type" value="Genomic_RNA"/>
</dbReference>
<dbReference type="EMBL" id="AF013255">
    <property type="protein sequence ID" value="AAB82440.1"/>
    <property type="molecule type" value="Genomic_RNA"/>
</dbReference>
<dbReference type="RefSeq" id="NP_056856.1">
    <property type="nucleotide sequence ID" value="NC_001781.1"/>
</dbReference>
<dbReference type="SMR" id="O42083"/>
<dbReference type="GeneID" id="1489818"/>
<dbReference type="KEGG" id="vg:1489818"/>
<dbReference type="Proteomes" id="UP000002472">
    <property type="component" value="Segment"/>
</dbReference>
<dbReference type="Proteomes" id="UP000180717">
    <property type="component" value="Genome"/>
</dbReference>
<dbReference type="GO" id="GO:0033650">
    <property type="term" value="C:host cell mitochondrion"/>
    <property type="evidence" value="ECO:0007669"/>
    <property type="project" value="UniProtKB-SubCell"/>
</dbReference>
<dbReference type="GO" id="GO:0042025">
    <property type="term" value="C:host cell nucleus"/>
    <property type="evidence" value="ECO:0007669"/>
    <property type="project" value="UniProtKB-SubCell"/>
</dbReference>
<dbReference type="GO" id="GO:0052150">
    <property type="term" value="P:symbiont-mediated perturbation of host apoptosis"/>
    <property type="evidence" value="ECO:0007669"/>
    <property type="project" value="UniProtKB-KW"/>
</dbReference>
<dbReference type="GO" id="GO:0039504">
    <property type="term" value="P:symbiont-mediated suppression of host adaptive immune response"/>
    <property type="evidence" value="ECO:0007669"/>
    <property type="project" value="UniProtKB-KW"/>
</dbReference>
<dbReference type="GO" id="GO:0039548">
    <property type="term" value="P:symbiont-mediated suppression of host cytoplasmic pattern recognition receptor signaling pathway via inhibition of IRF3 activity"/>
    <property type="evidence" value="ECO:0007669"/>
    <property type="project" value="UniProtKB-KW"/>
</dbReference>
<dbReference type="GO" id="GO:0039557">
    <property type="term" value="P:symbiont-mediated suppression of host cytoplasmic pattern recognition receptor signaling pathway via inhibition of IRF7 activity"/>
    <property type="evidence" value="ECO:0007669"/>
    <property type="project" value="UniProtKB-KW"/>
</dbReference>
<dbReference type="GO" id="GO:0039545">
    <property type="term" value="P:symbiont-mediated suppression of host cytoplasmic pattern recognition receptor signaling pathway via inhibition of MAVS activity"/>
    <property type="evidence" value="ECO:0007669"/>
    <property type="project" value="UniProtKB-KW"/>
</dbReference>
<dbReference type="GO" id="GO:0039540">
    <property type="term" value="P:symbiont-mediated suppression of host cytoplasmic pattern recognition receptor signaling pathway via inhibition of RIG-I activity"/>
    <property type="evidence" value="ECO:0007669"/>
    <property type="project" value="UniProtKB-KW"/>
</dbReference>
<dbReference type="GO" id="GO:0039723">
    <property type="term" value="P:symbiont-mediated suppression of host cytoplasmic pattern recognition receptor signaling pathway via inhibition of TBK1 activity"/>
    <property type="evidence" value="ECO:0007669"/>
    <property type="project" value="UniProtKB-KW"/>
</dbReference>
<dbReference type="GO" id="GO:0039564">
    <property type="term" value="P:symbiont-mediated suppression of host JAK-STAT cascade via inhibition of STAT2 activity"/>
    <property type="evidence" value="ECO:0007669"/>
    <property type="project" value="UniProtKB-KW"/>
</dbReference>
<dbReference type="GO" id="GO:0039722">
    <property type="term" value="P:symbiont-mediated suppression of host toll-like receptor signaling pathway"/>
    <property type="evidence" value="ECO:0007669"/>
    <property type="project" value="UniProtKB-KW"/>
</dbReference>
<dbReference type="GO" id="GO:0039502">
    <property type="term" value="P:symbiont-mediated suppression of host type I interferon-mediated signaling pathway"/>
    <property type="evidence" value="ECO:0007669"/>
    <property type="project" value="UniProtKB-KW"/>
</dbReference>
<dbReference type="InterPro" id="IPR005099">
    <property type="entry name" value="Pneumo_NS1"/>
</dbReference>
<dbReference type="Pfam" id="PF03438">
    <property type="entry name" value="Pneumo_NS1"/>
    <property type="match status" value="1"/>
</dbReference>
<proteinExistence type="inferred from homology"/>
<accession>O42083</accession>
<keyword id="KW-1035">Host cytoplasm</keyword>
<keyword id="KW-1045">Host mitochondrion</keyword>
<keyword id="KW-1048">Host nucleus</keyword>
<keyword id="KW-0945">Host-virus interaction</keyword>
<keyword id="KW-1080">Inhibition of host adaptive immune response by virus</keyword>
<keyword id="KW-1090">Inhibition of host innate immune response by virus</keyword>
<keyword id="KW-1114">Inhibition of host interferon signaling pathway by virus</keyword>
<keyword id="KW-1092">Inhibition of host IRF3 by virus</keyword>
<keyword id="KW-1093">Inhibition of host IRF7 by virus</keyword>
<keyword id="KW-1097">Inhibition of host MAVS by virus</keyword>
<keyword id="KW-1088">Inhibition of host RIG-I by virus</keyword>
<keyword id="KW-1113">Inhibition of host RLR pathway by virus</keyword>
<keyword id="KW-1106">Inhibition of host STAT2 by virus</keyword>
<keyword id="KW-1223">Inhibition of host TBK1 by virus</keyword>
<keyword id="KW-1225">Inhibition of host TLR pathway by virus</keyword>
<keyword id="KW-0922">Interferon antiviral system evasion</keyword>
<keyword id="KW-1119">Modulation of host cell apoptosis by virus</keyword>
<keyword id="KW-1185">Reference proteome</keyword>
<keyword id="KW-0899">Viral immunoevasion</keyword>
<reference key="1">
    <citation type="submission" date="1997-07" db="EMBL/GenBank/DDBJ databases">
        <authorList>
            <person name="Karron R.A."/>
            <person name="Buonagurio D.A."/>
            <person name="Georgiu A.F."/>
            <person name="Whitehead S.S."/>
            <person name="Adamus J.E."/>
            <person name="Clements-Mann M.L."/>
            <person name="Harris D.O."/>
            <person name="Randolph V.B."/>
            <person name="Udem S.A."/>
            <person name="Murphy B.R."/>
            <person name="Sidhu M.S."/>
        </authorList>
    </citation>
    <scope>NUCLEOTIDE SEQUENCE [GENOMIC RNA]</scope>
</reference>
<reference key="2">
    <citation type="journal article" date="2019" name="PLoS Pathog.">
        <title>Respiratory syncytial virus nonstructural proteins 1 and 2: Exceptional disrupters of innate immune responses.</title>
        <authorList>
            <person name="Sedeyn K."/>
            <person name="Schepens B."/>
            <person name="Saelens X."/>
        </authorList>
    </citation>
    <scope>REVIEW</scope>
</reference>
<reference key="3">
    <citation type="journal article" date="2020" name="Front. Cell. Infect. Microbiol.">
        <title>Respiratory Syncytial Virus's Non-structural Proteins: Masters of Interference.</title>
        <authorList>
            <person name="Thornhill E.M."/>
            <person name="Verhoeven D."/>
        </authorList>
    </citation>
    <scope>REVIEW</scope>
</reference>
<gene>
    <name type="primary">1C</name>
    <name type="synonym">NS1</name>
</gene>
<evidence type="ECO:0000250" key="1">
    <source>
        <dbReference type="UniProtKB" id="P0DOE9"/>
    </source>
</evidence>
<evidence type="ECO:0000305" key="2"/>
<feature type="chain" id="PRO_0000142784" description="Non-structural protein 1">
    <location>
        <begin position="1"/>
        <end position="139"/>
    </location>
</feature>
<feature type="short sequence motif" description="DLNP; interaction with MAP1B" evidence="1">
    <location>
        <begin position="136"/>
        <end position="139"/>
    </location>
</feature>